<comment type="function">
    <text evidence="1">Regulates membrane-cell wall junctions and localized cell wall deposition. Required for establishment of the Casparian strip membrane domain (CSD) and the subsequent formation of Casparian strips, a cell wall modification of the root endodermis that determines an apoplastic barrier between the intraorganismal apoplasm and the extraorganismal apoplasm and prevents lateral diffusion (By similarity).</text>
</comment>
<comment type="subunit">
    <text evidence="1">Homodimer and heterodimers.</text>
</comment>
<comment type="subcellular location">
    <subcellularLocation>
        <location evidence="1">Cell membrane</location>
        <topology evidence="1">Multi-pass membrane protein</topology>
    </subcellularLocation>
    <text evidence="1">Very restricted localization following a belt shape within the plasma membrane which coincides with the position of the Casparian strip membrane domain in the root endodermis.</text>
</comment>
<comment type="similarity">
    <text evidence="3">Belongs to the Casparian strip membrane proteins (CASP) family.</text>
</comment>
<organism>
    <name type="scientific">Brachypodium distachyon</name>
    <name type="common">Purple false brome</name>
    <name type="synonym">Trachynia distachya</name>
    <dbReference type="NCBI Taxonomy" id="15368"/>
    <lineage>
        <taxon>Eukaryota</taxon>
        <taxon>Viridiplantae</taxon>
        <taxon>Streptophyta</taxon>
        <taxon>Embryophyta</taxon>
        <taxon>Tracheophyta</taxon>
        <taxon>Spermatophyta</taxon>
        <taxon>Magnoliopsida</taxon>
        <taxon>Liliopsida</taxon>
        <taxon>Poales</taxon>
        <taxon>Poaceae</taxon>
        <taxon>BOP clade</taxon>
        <taxon>Pooideae</taxon>
        <taxon>Stipodae</taxon>
        <taxon>Brachypodieae</taxon>
        <taxon>Brachypodium</taxon>
    </lineage>
</organism>
<evidence type="ECO:0000250" key="1"/>
<evidence type="ECO:0000255" key="2"/>
<evidence type="ECO:0000305" key="3"/>
<gene>
    <name type="ordered locus">Bradi5g15727</name>
    <name type="ORF">LOC100842918</name>
</gene>
<protein>
    <recommendedName>
        <fullName>Casparian strip membrane protein 1</fullName>
        <shortName>BdCASP1</shortName>
    </recommendedName>
</protein>
<dbReference type="EMBL" id="CM000884">
    <property type="protein sequence ID" value="KQJ83603.1"/>
    <property type="molecule type" value="Genomic_DNA"/>
</dbReference>
<dbReference type="RefSeq" id="XP_003580136.1">
    <property type="nucleotide sequence ID" value="XM_003580088.3"/>
</dbReference>
<dbReference type="FunCoup" id="P0DI38">
    <property type="interactions" value="6"/>
</dbReference>
<dbReference type="STRING" id="15368.P0DI38"/>
<dbReference type="EnsemblPlants" id="KQJ83603">
    <property type="protein sequence ID" value="KQJ83603"/>
    <property type="gene ID" value="BRADI_5g15727v3"/>
</dbReference>
<dbReference type="GeneID" id="100842918"/>
<dbReference type="Gramene" id="KQJ83603">
    <property type="protein sequence ID" value="KQJ83603"/>
    <property type="gene ID" value="BRADI_5g15727v3"/>
</dbReference>
<dbReference type="KEGG" id="bdi:100842918"/>
<dbReference type="eggNOG" id="ENOG502QZV7">
    <property type="taxonomic scope" value="Eukaryota"/>
</dbReference>
<dbReference type="HOGENOM" id="CLU_066104_3_1_1"/>
<dbReference type="InParanoid" id="P0DI38"/>
<dbReference type="OMA" id="TSANWIA"/>
<dbReference type="OrthoDB" id="753675at2759"/>
<dbReference type="Proteomes" id="UP000008810">
    <property type="component" value="Chromosome 5"/>
</dbReference>
<dbReference type="GO" id="GO:0048226">
    <property type="term" value="C:Casparian strip"/>
    <property type="evidence" value="ECO:0000318"/>
    <property type="project" value="GO_Central"/>
</dbReference>
<dbReference type="GO" id="GO:0005886">
    <property type="term" value="C:plasma membrane"/>
    <property type="evidence" value="ECO:0000318"/>
    <property type="project" value="GO_Central"/>
</dbReference>
<dbReference type="GO" id="GO:0042545">
    <property type="term" value="P:cell wall modification"/>
    <property type="evidence" value="ECO:0000318"/>
    <property type="project" value="GO_Central"/>
</dbReference>
<dbReference type="GO" id="GO:0007043">
    <property type="term" value="P:cell-cell junction assembly"/>
    <property type="evidence" value="ECO:0000318"/>
    <property type="project" value="GO_Central"/>
</dbReference>
<dbReference type="InterPro" id="IPR006459">
    <property type="entry name" value="CASP/CASPL"/>
</dbReference>
<dbReference type="InterPro" id="IPR006702">
    <property type="entry name" value="CASP_dom"/>
</dbReference>
<dbReference type="InterPro" id="IPR044173">
    <property type="entry name" value="CASPL"/>
</dbReference>
<dbReference type="NCBIfam" id="TIGR01569">
    <property type="entry name" value="A_tha_TIGR01569"/>
    <property type="match status" value="1"/>
</dbReference>
<dbReference type="PANTHER" id="PTHR36488:SF11">
    <property type="entry name" value="CASP-LIKE PROTEIN"/>
    <property type="match status" value="1"/>
</dbReference>
<dbReference type="PANTHER" id="PTHR36488">
    <property type="entry name" value="CASP-LIKE PROTEIN 1U1"/>
    <property type="match status" value="1"/>
</dbReference>
<dbReference type="Pfam" id="PF04535">
    <property type="entry name" value="CASP_dom"/>
    <property type="match status" value="1"/>
</dbReference>
<proteinExistence type="inferred from homology"/>
<name>CASP1_BRADI</name>
<keyword id="KW-1003">Cell membrane</keyword>
<keyword id="KW-0961">Cell wall biogenesis/degradation</keyword>
<keyword id="KW-0472">Membrane</keyword>
<keyword id="KW-1185">Reference proteome</keyword>
<keyword id="KW-0812">Transmembrane</keyword>
<keyword id="KW-1133">Transmembrane helix</keyword>
<accession>P0DI38</accession>
<accession>A0A0Q3H5U0</accession>
<reference key="1">
    <citation type="journal article" date="2010" name="Nature">
        <title>Genome sequencing and analysis of the model grass Brachypodium distachyon.</title>
        <authorList>
            <consortium name="International Brachypodium Initiative"/>
        </authorList>
    </citation>
    <scope>NUCLEOTIDE SEQUENCE [LARGE SCALE GENOMIC DNA]</scope>
    <source>
        <strain>cv. Bd21</strain>
    </source>
</reference>
<reference key="2">
    <citation type="journal article" date="2014" name="Plant Physiol.">
        <title>Functional and evolutionary analysis of the CASPARIAN STRIP MEMBRANE DOMAIN PROTEIN family.</title>
        <authorList>
            <person name="Roppolo D."/>
            <person name="Boeckmann B."/>
            <person name="Pfister A."/>
            <person name="Boutet E."/>
            <person name="Rubio M.C."/>
            <person name="Denervaud-Tendon V."/>
            <person name="Vermeer J.E."/>
            <person name="Gheyselinck J."/>
            <person name="Xenarios I."/>
            <person name="Geldner N."/>
        </authorList>
    </citation>
    <scope>GENE FAMILY</scope>
    <scope>NOMENCLATURE</scope>
</reference>
<sequence length="231" mass="24241">MSTSETATVIPVYDVAPGQQGAPAVDRAPAPSAPPAAAAAPAAAAAKSTAPRRFAAGRFFRQSDRGSRCLAFLDFLLRIAAFGPALAAAIATGTSDETLSVFTEFFQFRARFDDFPAFLFLMVANAIAAGYLVLSLPFSAVVVLRPQATGLRLLLLVCDTIMIGLLTAAAAAAAAIVELAHNGNERANWVAICMQFHGFCQRTSGAVVASFLSVFLFLLLVVLAAFAIRKR</sequence>
<feature type="chain" id="PRO_0000417764" description="Casparian strip membrane protein 1">
    <location>
        <begin position="1"/>
        <end position="231"/>
    </location>
</feature>
<feature type="topological domain" description="Cytoplasmic" evidence="2">
    <location>
        <begin position="1"/>
        <end position="69"/>
    </location>
</feature>
<feature type="transmembrane region" description="Helical" evidence="2">
    <location>
        <begin position="70"/>
        <end position="90"/>
    </location>
</feature>
<feature type="topological domain" description="Extracellular" evidence="2">
    <location>
        <begin position="91"/>
        <end position="117"/>
    </location>
</feature>
<feature type="transmembrane region" description="Helical" evidence="2">
    <location>
        <begin position="118"/>
        <end position="138"/>
    </location>
</feature>
<feature type="topological domain" description="Cytoplasmic" evidence="2">
    <location>
        <begin position="139"/>
        <end position="152"/>
    </location>
</feature>
<feature type="transmembrane region" description="Helical" evidence="2">
    <location>
        <begin position="153"/>
        <end position="173"/>
    </location>
</feature>
<feature type="topological domain" description="Extracellular" evidence="2">
    <location>
        <begin position="174"/>
        <end position="207"/>
    </location>
</feature>
<feature type="transmembrane region" description="Helical" evidence="2">
    <location>
        <begin position="208"/>
        <end position="228"/>
    </location>
</feature>
<feature type="topological domain" description="Cytoplasmic" evidence="2">
    <location>
        <begin position="229"/>
        <end position="231"/>
    </location>
</feature>